<gene>
    <name type="primary">arr3</name>
</gene>
<proteinExistence type="evidence at transcript level"/>
<organism>
    <name type="scientific">Xenopus laevis</name>
    <name type="common">African clawed frog</name>
    <dbReference type="NCBI Taxonomy" id="8355"/>
    <lineage>
        <taxon>Eukaryota</taxon>
        <taxon>Metazoa</taxon>
        <taxon>Chordata</taxon>
        <taxon>Craniata</taxon>
        <taxon>Vertebrata</taxon>
        <taxon>Euteleostomi</taxon>
        <taxon>Amphibia</taxon>
        <taxon>Batrachia</taxon>
        <taxon>Anura</taxon>
        <taxon>Pipoidea</taxon>
        <taxon>Pipidae</taxon>
        <taxon>Xenopodinae</taxon>
        <taxon>Xenopus</taxon>
        <taxon>Xenopus</taxon>
    </lineage>
</organism>
<feature type="chain" id="PRO_0000205208" description="Arrestin-C">
    <location>
        <begin position="1"/>
        <end position="387"/>
    </location>
</feature>
<sequence length="387" mass="43046">MAESSKVFKKSSGDGKLAIYLAKRDYVDHVDHVEPVDGMIIIDPEYQKDKKVFVTLACTFRYGRDDHELIGLSFKKELCFLHCQVYPPLPEDKKPLTPLQEKLSKKLGVNAFPFCFNMTTDLPCSVTLQPGPEDTGKKCGVDFEVKGFWADNVEEKISRKNSVQLIIRKVQFAPEATGTASCVQTTRQFMMSDKPLQVEVSLDKEVYYHGEPVGIKLKINNNTSKIVKKIKITVEQLTDVVLYSLDKYTKIVCCEEINETVAANANFSGSYSLTPLLANNKEKRGLALDGKLKHGDTNLASSTILRPGMDKEVLGMLVSYKVRVSLVVARGGILGDLTSSDVSVELPFTLMHPKPSPDQTNIEDVVIEEFARQKLQGAEGEDDKDDA</sequence>
<name>ARRC_XENLA</name>
<dbReference type="EMBL" id="L40463">
    <property type="protein sequence ID" value="AAC42225.1"/>
    <property type="molecule type" value="mRNA"/>
</dbReference>
<dbReference type="PIR" id="I51404">
    <property type="entry name" value="I51404"/>
</dbReference>
<dbReference type="RefSeq" id="NP_001081780.1">
    <property type="nucleotide sequence ID" value="NM_001088311.1"/>
</dbReference>
<dbReference type="SMR" id="P51483"/>
<dbReference type="DNASU" id="398046"/>
<dbReference type="GeneID" id="398046"/>
<dbReference type="KEGG" id="xla:398046"/>
<dbReference type="AGR" id="Xenbase:XB-GENE-966163"/>
<dbReference type="CTD" id="398046"/>
<dbReference type="Xenbase" id="XB-GENE-966163">
    <property type="gene designation" value="arr3.L"/>
</dbReference>
<dbReference type="OrthoDB" id="298939at2759"/>
<dbReference type="Proteomes" id="UP000186698">
    <property type="component" value="Chromosome 8L"/>
</dbReference>
<dbReference type="Bgee" id="398046">
    <property type="expression patterns" value="Expressed in camera-type eye and 5 other cell types or tissues"/>
</dbReference>
<dbReference type="GO" id="GO:0001664">
    <property type="term" value="F:G protein-coupled receptor binding"/>
    <property type="evidence" value="ECO:0000318"/>
    <property type="project" value="GO_Central"/>
</dbReference>
<dbReference type="GO" id="GO:0002031">
    <property type="term" value="P:G protein-coupled receptor internalization"/>
    <property type="evidence" value="ECO:0000318"/>
    <property type="project" value="GO_Central"/>
</dbReference>
<dbReference type="GO" id="GO:0007165">
    <property type="term" value="P:signal transduction"/>
    <property type="evidence" value="ECO:0007669"/>
    <property type="project" value="InterPro"/>
</dbReference>
<dbReference type="GO" id="GO:0007601">
    <property type="term" value="P:visual perception"/>
    <property type="evidence" value="ECO:0000318"/>
    <property type="project" value="GO_Central"/>
</dbReference>
<dbReference type="FunFam" id="2.60.40.840:FF:000002">
    <property type="entry name" value="Arrestin 3"/>
    <property type="match status" value="1"/>
</dbReference>
<dbReference type="FunFam" id="2.60.40.640:FF:000011">
    <property type="entry name" value="S-arrestin isoform X2"/>
    <property type="match status" value="1"/>
</dbReference>
<dbReference type="Gene3D" id="2.60.40.640">
    <property type="match status" value="1"/>
</dbReference>
<dbReference type="Gene3D" id="2.60.40.840">
    <property type="match status" value="1"/>
</dbReference>
<dbReference type="InterPro" id="IPR000698">
    <property type="entry name" value="Arrestin"/>
</dbReference>
<dbReference type="InterPro" id="IPR014752">
    <property type="entry name" value="Arrestin-like_C"/>
</dbReference>
<dbReference type="InterPro" id="IPR011021">
    <property type="entry name" value="Arrestin-like_N"/>
</dbReference>
<dbReference type="InterPro" id="IPR011022">
    <property type="entry name" value="Arrestin_C-like"/>
</dbReference>
<dbReference type="InterPro" id="IPR017864">
    <property type="entry name" value="Arrestin_CS"/>
</dbReference>
<dbReference type="InterPro" id="IPR014753">
    <property type="entry name" value="Arrestin_N"/>
</dbReference>
<dbReference type="InterPro" id="IPR014756">
    <property type="entry name" value="Ig_E-set"/>
</dbReference>
<dbReference type="PANTHER" id="PTHR11792">
    <property type="entry name" value="ARRESTIN"/>
    <property type="match status" value="1"/>
</dbReference>
<dbReference type="PANTHER" id="PTHR11792:SF19">
    <property type="entry name" value="ARRESTIN-C"/>
    <property type="match status" value="1"/>
</dbReference>
<dbReference type="Pfam" id="PF02752">
    <property type="entry name" value="Arrestin_C"/>
    <property type="match status" value="1"/>
</dbReference>
<dbReference type="Pfam" id="PF00339">
    <property type="entry name" value="Arrestin_N"/>
    <property type="match status" value="1"/>
</dbReference>
<dbReference type="PRINTS" id="PR00309">
    <property type="entry name" value="ARRESTIN"/>
</dbReference>
<dbReference type="SMART" id="SM01017">
    <property type="entry name" value="Arrestin_C"/>
    <property type="match status" value="1"/>
</dbReference>
<dbReference type="SUPFAM" id="SSF81296">
    <property type="entry name" value="E set domains"/>
    <property type="match status" value="2"/>
</dbReference>
<dbReference type="PROSITE" id="PS00295">
    <property type="entry name" value="ARRESTINS"/>
    <property type="match status" value="1"/>
</dbReference>
<comment type="function">
    <text>May play a role in an as yet undefined retina-specific signal transduction. Could bind to photoactivated-phosphorylated red/green opsins.</text>
</comment>
<comment type="tissue specificity">
    <text>Retina and pineal gland.</text>
</comment>
<comment type="similarity">
    <text evidence="1">Belongs to the arrestin family.</text>
</comment>
<keyword id="KW-1185">Reference proteome</keyword>
<keyword id="KW-0716">Sensory transduction</keyword>
<keyword id="KW-0844">Vision</keyword>
<accession>P51483</accession>
<evidence type="ECO:0000305" key="1"/>
<protein>
    <recommendedName>
        <fullName>Arrestin-C</fullName>
    </recommendedName>
    <alternativeName>
        <fullName>Cone arrestin</fullName>
    </alternativeName>
</protein>
<reference key="1">
    <citation type="journal article" date="1995" name="FEBS Lett.">
        <title>The arrestin superfamily: cone arrestins are a fourth family.</title>
        <authorList>
            <person name="Craft C.M."/>
            <person name="Whitmore D.H."/>
        </authorList>
    </citation>
    <scope>NUCLEOTIDE SEQUENCE [MRNA]</scope>
    <source>
        <tissue>Retina</tissue>
    </source>
</reference>